<dbReference type="EC" id="6.3.5.-" evidence="1"/>
<dbReference type="EMBL" id="CP000141">
    <property type="protein sequence ID" value="ABB16244.1"/>
    <property type="molecule type" value="Genomic_DNA"/>
</dbReference>
<dbReference type="RefSeq" id="WP_011344023.1">
    <property type="nucleotide sequence ID" value="NC_007503.1"/>
</dbReference>
<dbReference type="SMR" id="Q3AD37"/>
<dbReference type="FunCoup" id="Q3AD37">
    <property type="interactions" value="409"/>
</dbReference>
<dbReference type="STRING" id="246194.CHY_1101"/>
<dbReference type="KEGG" id="chy:CHY_1101"/>
<dbReference type="eggNOG" id="COG0721">
    <property type="taxonomic scope" value="Bacteria"/>
</dbReference>
<dbReference type="HOGENOM" id="CLU_105899_1_2_9"/>
<dbReference type="InParanoid" id="Q3AD37"/>
<dbReference type="OrthoDB" id="9813938at2"/>
<dbReference type="Proteomes" id="UP000002706">
    <property type="component" value="Chromosome"/>
</dbReference>
<dbReference type="GO" id="GO:0050566">
    <property type="term" value="F:asparaginyl-tRNA synthase (glutamine-hydrolyzing) activity"/>
    <property type="evidence" value="ECO:0007669"/>
    <property type="project" value="RHEA"/>
</dbReference>
<dbReference type="GO" id="GO:0005524">
    <property type="term" value="F:ATP binding"/>
    <property type="evidence" value="ECO:0007669"/>
    <property type="project" value="UniProtKB-KW"/>
</dbReference>
<dbReference type="GO" id="GO:0050567">
    <property type="term" value="F:glutaminyl-tRNA synthase (glutamine-hydrolyzing) activity"/>
    <property type="evidence" value="ECO:0007669"/>
    <property type="project" value="UniProtKB-UniRule"/>
</dbReference>
<dbReference type="GO" id="GO:0070681">
    <property type="term" value="P:glutaminyl-tRNAGln biosynthesis via transamidation"/>
    <property type="evidence" value="ECO:0007669"/>
    <property type="project" value="TreeGrafter"/>
</dbReference>
<dbReference type="GO" id="GO:0006450">
    <property type="term" value="P:regulation of translational fidelity"/>
    <property type="evidence" value="ECO:0007669"/>
    <property type="project" value="InterPro"/>
</dbReference>
<dbReference type="GO" id="GO:0006412">
    <property type="term" value="P:translation"/>
    <property type="evidence" value="ECO:0007669"/>
    <property type="project" value="UniProtKB-UniRule"/>
</dbReference>
<dbReference type="Gene3D" id="1.10.20.60">
    <property type="entry name" value="Glu-tRNAGln amidotransferase C subunit, N-terminal domain"/>
    <property type="match status" value="1"/>
</dbReference>
<dbReference type="HAMAP" id="MF_00122">
    <property type="entry name" value="GatC"/>
    <property type="match status" value="1"/>
</dbReference>
<dbReference type="InterPro" id="IPR036113">
    <property type="entry name" value="Asp/Glu-ADT_sf_sub_c"/>
</dbReference>
<dbReference type="InterPro" id="IPR003837">
    <property type="entry name" value="GatC"/>
</dbReference>
<dbReference type="NCBIfam" id="TIGR00135">
    <property type="entry name" value="gatC"/>
    <property type="match status" value="1"/>
</dbReference>
<dbReference type="PANTHER" id="PTHR15004">
    <property type="entry name" value="GLUTAMYL-TRNA(GLN) AMIDOTRANSFERASE SUBUNIT C, MITOCHONDRIAL"/>
    <property type="match status" value="1"/>
</dbReference>
<dbReference type="PANTHER" id="PTHR15004:SF0">
    <property type="entry name" value="GLUTAMYL-TRNA(GLN) AMIDOTRANSFERASE SUBUNIT C, MITOCHONDRIAL"/>
    <property type="match status" value="1"/>
</dbReference>
<dbReference type="Pfam" id="PF02686">
    <property type="entry name" value="GatC"/>
    <property type="match status" value="1"/>
</dbReference>
<dbReference type="SUPFAM" id="SSF141000">
    <property type="entry name" value="Glu-tRNAGln amidotransferase C subunit"/>
    <property type="match status" value="1"/>
</dbReference>
<evidence type="ECO:0000255" key="1">
    <source>
        <dbReference type="HAMAP-Rule" id="MF_00122"/>
    </source>
</evidence>
<accession>Q3AD37</accession>
<organism>
    <name type="scientific">Carboxydothermus hydrogenoformans (strain ATCC BAA-161 / DSM 6008 / Z-2901)</name>
    <dbReference type="NCBI Taxonomy" id="246194"/>
    <lineage>
        <taxon>Bacteria</taxon>
        <taxon>Bacillati</taxon>
        <taxon>Bacillota</taxon>
        <taxon>Clostridia</taxon>
        <taxon>Thermoanaerobacterales</taxon>
        <taxon>Thermoanaerobacteraceae</taxon>
        <taxon>Carboxydothermus</taxon>
    </lineage>
</organism>
<sequence length="94" mass="10996">MTISLKDVEHVAMLARLKLSDEEKEMYTKQLNDILKYAEQLQELDTENVKPTAHVLPIKNVFREDKVHQHLDPEKALANAPEREENFFKVPKII</sequence>
<feature type="chain" id="PRO_1000016102" description="Aspartyl/glutamyl-tRNA(Asn/Gln) amidotransferase subunit C">
    <location>
        <begin position="1"/>
        <end position="94"/>
    </location>
</feature>
<reference key="1">
    <citation type="journal article" date="2005" name="PLoS Genet.">
        <title>Life in hot carbon monoxide: the complete genome sequence of Carboxydothermus hydrogenoformans Z-2901.</title>
        <authorList>
            <person name="Wu M."/>
            <person name="Ren Q."/>
            <person name="Durkin A.S."/>
            <person name="Daugherty S.C."/>
            <person name="Brinkac L.M."/>
            <person name="Dodson R.J."/>
            <person name="Madupu R."/>
            <person name="Sullivan S.A."/>
            <person name="Kolonay J.F."/>
            <person name="Nelson W.C."/>
            <person name="Tallon L.J."/>
            <person name="Jones K.M."/>
            <person name="Ulrich L.E."/>
            <person name="Gonzalez J.M."/>
            <person name="Zhulin I.B."/>
            <person name="Robb F.T."/>
            <person name="Eisen J.A."/>
        </authorList>
    </citation>
    <scope>NUCLEOTIDE SEQUENCE [LARGE SCALE GENOMIC DNA]</scope>
    <source>
        <strain>ATCC BAA-161 / DSM 6008 / Z-2901</strain>
    </source>
</reference>
<protein>
    <recommendedName>
        <fullName evidence="1">Aspartyl/glutamyl-tRNA(Asn/Gln) amidotransferase subunit C</fullName>
        <shortName evidence="1">Asp/Glu-ADT subunit C</shortName>
        <ecNumber evidence="1">6.3.5.-</ecNumber>
    </recommendedName>
</protein>
<keyword id="KW-0067">ATP-binding</keyword>
<keyword id="KW-0436">Ligase</keyword>
<keyword id="KW-0547">Nucleotide-binding</keyword>
<keyword id="KW-0648">Protein biosynthesis</keyword>
<keyword id="KW-1185">Reference proteome</keyword>
<proteinExistence type="inferred from homology"/>
<gene>
    <name evidence="1" type="primary">gatC</name>
    <name type="ordered locus">CHY_1101</name>
</gene>
<name>GATC_CARHZ</name>
<comment type="function">
    <text evidence="1">Allows the formation of correctly charged Asn-tRNA(Asn) or Gln-tRNA(Gln) through the transamidation of misacylated Asp-tRNA(Asn) or Glu-tRNA(Gln) in organisms which lack either or both of asparaginyl-tRNA or glutaminyl-tRNA synthetases. The reaction takes place in the presence of glutamine and ATP through an activated phospho-Asp-tRNA(Asn) or phospho-Glu-tRNA(Gln).</text>
</comment>
<comment type="catalytic activity">
    <reaction evidence="1">
        <text>L-glutamyl-tRNA(Gln) + L-glutamine + ATP + H2O = L-glutaminyl-tRNA(Gln) + L-glutamate + ADP + phosphate + H(+)</text>
        <dbReference type="Rhea" id="RHEA:17521"/>
        <dbReference type="Rhea" id="RHEA-COMP:9681"/>
        <dbReference type="Rhea" id="RHEA-COMP:9684"/>
        <dbReference type="ChEBI" id="CHEBI:15377"/>
        <dbReference type="ChEBI" id="CHEBI:15378"/>
        <dbReference type="ChEBI" id="CHEBI:29985"/>
        <dbReference type="ChEBI" id="CHEBI:30616"/>
        <dbReference type="ChEBI" id="CHEBI:43474"/>
        <dbReference type="ChEBI" id="CHEBI:58359"/>
        <dbReference type="ChEBI" id="CHEBI:78520"/>
        <dbReference type="ChEBI" id="CHEBI:78521"/>
        <dbReference type="ChEBI" id="CHEBI:456216"/>
    </reaction>
</comment>
<comment type="catalytic activity">
    <reaction evidence="1">
        <text>L-aspartyl-tRNA(Asn) + L-glutamine + ATP + H2O = L-asparaginyl-tRNA(Asn) + L-glutamate + ADP + phosphate + 2 H(+)</text>
        <dbReference type="Rhea" id="RHEA:14513"/>
        <dbReference type="Rhea" id="RHEA-COMP:9674"/>
        <dbReference type="Rhea" id="RHEA-COMP:9677"/>
        <dbReference type="ChEBI" id="CHEBI:15377"/>
        <dbReference type="ChEBI" id="CHEBI:15378"/>
        <dbReference type="ChEBI" id="CHEBI:29985"/>
        <dbReference type="ChEBI" id="CHEBI:30616"/>
        <dbReference type="ChEBI" id="CHEBI:43474"/>
        <dbReference type="ChEBI" id="CHEBI:58359"/>
        <dbReference type="ChEBI" id="CHEBI:78515"/>
        <dbReference type="ChEBI" id="CHEBI:78516"/>
        <dbReference type="ChEBI" id="CHEBI:456216"/>
    </reaction>
</comment>
<comment type="subunit">
    <text evidence="1">Heterotrimer of A, B and C subunits.</text>
</comment>
<comment type="similarity">
    <text evidence="1">Belongs to the GatC family.</text>
</comment>